<accession>Q3BYN0</accession>
<name>BIOF_XANE5</name>
<reference key="1">
    <citation type="journal article" date="2005" name="J. Bacteriol.">
        <title>Insights into genome plasticity and pathogenicity of the plant pathogenic Bacterium Xanthomonas campestris pv. vesicatoria revealed by the complete genome sequence.</title>
        <authorList>
            <person name="Thieme F."/>
            <person name="Koebnik R."/>
            <person name="Bekel T."/>
            <person name="Berger C."/>
            <person name="Boch J."/>
            <person name="Buettner D."/>
            <person name="Caldana C."/>
            <person name="Gaigalat L."/>
            <person name="Goesmann A."/>
            <person name="Kay S."/>
            <person name="Kirchner O."/>
            <person name="Lanz C."/>
            <person name="Linke B."/>
            <person name="McHardy A.C."/>
            <person name="Meyer F."/>
            <person name="Mittenhuber G."/>
            <person name="Nies D.H."/>
            <person name="Niesbach-Kloesgen U."/>
            <person name="Patschkowski T."/>
            <person name="Rueckert C."/>
            <person name="Rupp O."/>
            <person name="Schneiker S."/>
            <person name="Schuster S.C."/>
            <person name="Vorhoelter F.J."/>
            <person name="Weber E."/>
            <person name="Puehler A."/>
            <person name="Bonas U."/>
            <person name="Bartels D."/>
            <person name="Kaiser O."/>
        </authorList>
    </citation>
    <scope>NUCLEOTIDE SEQUENCE [LARGE SCALE GENOMIC DNA]</scope>
    <source>
        <strain>85-10</strain>
    </source>
</reference>
<organism>
    <name type="scientific">Xanthomonas euvesicatoria pv. vesicatoria (strain 85-10)</name>
    <name type="common">Xanthomonas campestris pv. vesicatoria</name>
    <dbReference type="NCBI Taxonomy" id="316273"/>
    <lineage>
        <taxon>Bacteria</taxon>
        <taxon>Pseudomonadati</taxon>
        <taxon>Pseudomonadota</taxon>
        <taxon>Gammaproteobacteria</taxon>
        <taxon>Lysobacterales</taxon>
        <taxon>Lysobacteraceae</taxon>
        <taxon>Xanthomonas</taxon>
    </lineage>
</organism>
<feature type="chain" id="PRO_0000381141" description="8-amino-7-oxononanoate synthase">
    <location>
        <begin position="1"/>
        <end position="401"/>
    </location>
</feature>
<feature type="binding site" evidence="1">
    <location>
        <position position="24"/>
    </location>
    <ligand>
        <name>substrate</name>
    </ligand>
</feature>
<feature type="binding site" evidence="1">
    <location>
        <begin position="111"/>
        <end position="112"/>
    </location>
    <ligand>
        <name>pyridoxal 5'-phosphate</name>
        <dbReference type="ChEBI" id="CHEBI:597326"/>
    </ligand>
</feature>
<feature type="binding site" evidence="1">
    <location>
        <position position="137"/>
    </location>
    <ligand>
        <name>substrate</name>
    </ligand>
</feature>
<feature type="binding site" evidence="1">
    <location>
        <position position="183"/>
    </location>
    <ligand>
        <name>pyridoxal 5'-phosphate</name>
        <dbReference type="ChEBI" id="CHEBI:597326"/>
    </ligand>
</feature>
<feature type="binding site" evidence="1">
    <location>
        <position position="211"/>
    </location>
    <ligand>
        <name>pyridoxal 5'-phosphate</name>
        <dbReference type="ChEBI" id="CHEBI:597326"/>
    </ligand>
</feature>
<feature type="binding site" evidence="1">
    <location>
        <position position="240"/>
    </location>
    <ligand>
        <name>pyridoxal 5'-phosphate</name>
        <dbReference type="ChEBI" id="CHEBI:597326"/>
    </ligand>
</feature>
<feature type="binding site" evidence="1">
    <location>
        <position position="357"/>
    </location>
    <ligand>
        <name>substrate</name>
    </ligand>
</feature>
<feature type="modified residue" description="N6-(pyridoxal phosphate)lysine" evidence="1">
    <location>
        <position position="243"/>
    </location>
</feature>
<gene>
    <name evidence="1" type="primary">bioF</name>
    <name type="ordered locus">XCV0402</name>
</gene>
<protein>
    <recommendedName>
        <fullName evidence="1">8-amino-7-oxononanoate synthase</fullName>
        <shortName evidence="1">AONS</shortName>
        <ecNumber evidence="1">2.3.1.47</ecNumber>
    </recommendedName>
    <alternativeName>
        <fullName evidence="1">7-keto-8-amino-pelargonic acid synthase</fullName>
        <shortName evidence="1">7-KAP synthase</shortName>
        <shortName evidence="1">KAPA synthase</shortName>
    </alternativeName>
    <alternativeName>
        <fullName evidence="1">8-amino-7-ketopelargonate synthase</fullName>
    </alternativeName>
</protein>
<keyword id="KW-0093">Biotin biosynthesis</keyword>
<keyword id="KW-0663">Pyridoxal phosphate</keyword>
<keyword id="KW-0808">Transferase</keyword>
<proteinExistence type="inferred from homology"/>
<comment type="function">
    <text evidence="1">Catalyzes the decarboxylative condensation of pimeloyl-[acyl-carrier protein] and L-alanine to produce 8-amino-7-oxononanoate (AON), [acyl-carrier protein], and carbon dioxide.</text>
</comment>
<comment type="catalytic activity">
    <reaction evidence="1">
        <text>6-carboxyhexanoyl-[ACP] + L-alanine + H(+) = (8S)-8-amino-7-oxononanoate + holo-[ACP] + CO2</text>
        <dbReference type="Rhea" id="RHEA:42288"/>
        <dbReference type="Rhea" id="RHEA-COMP:9685"/>
        <dbReference type="Rhea" id="RHEA-COMP:9955"/>
        <dbReference type="ChEBI" id="CHEBI:15378"/>
        <dbReference type="ChEBI" id="CHEBI:16526"/>
        <dbReference type="ChEBI" id="CHEBI:57972"/>
        <dbReference type="ChEBI" id="CHEBI:64479"/>
        <dbReference type="ChEBI" id="CHEBI:78846"/>
        <dbReference type="ChEBI" id="CHEBI:149468"/>
        <dbReference type="EC" id="2.3.1.47"/>
    </reaction>
</comment>
<comment type="cofactor">
    <cofactor evidence="1">
        <name>pyridoxal 5'-phosphate</name>
        <dbReference type="ChEBI" id="CHEBI:597326"/>
    </cofactor>
</comment>
<comment type="pathway">
    <text evidence="1">Cofactor biosynthesis; biotin biosynthesis.</text>
</comment>
<comment type="subunit">
    <text evidence="1">Homodimer.</text>
</comment>
<comment type="similarity">
    <text evidence="1">Belongs to the class-II pyridoxal-phosphate-dependent aminotransferase family. BioF subfamily.</text>
</comment>
<comment type="sequence caution" evidence="2">
    <conflict type="erroneous initiation">
        <sequence resource="EMBL-CDS" id="CAJ22033"/>
    </conflict>
</comment>
<evidence type="ECO:0000255" key="1">
    <source>
        <dbReference type="HAMAP-Rule" id="MF_01693"/>
    </source>
</evidence>
<evidence type="ECO:0000305" key="2"/>
<sequence>MARPDLHERISSLRKLRVAQERVRVRRQVGRRDGVRLEIDGRWLTGFCSNDYLGLSQQFEVVAALQDAAARDGAGATASHLICGHHTAHETLEREIADWLGYPSALLFGSGFIANLAVQQALLSEEDDVCVQDRLNHASLLDATRLAGCRLRRYPHLDVEGAMRQLKGAPEGAAMLATDGVFSMDGDVAPLRALSLVARMQHALFYVDDAHGVGVLGPQGRGCVADAGLGVAEVPLQLVTLGKALGGYGAVVVGEEALVRHLAETARPYIYTTALPPAQVAATLAAVRLARRDDWRRTRLVELIGAFRDGARKHGFELMASDTPIQPLLCGEEATVMAMSAALEHAGFMVGAIRPPTVPEGKARLRVTLSALHTPQQVQALIEAIVQARDVVSRQPLRASA</sequence>
<dbReference type="EC" id="2.3.1.47" evidence="1"/>
<dbReference type="EMBL" id="AM039952">
    <property type="protein sequence ID" value="CAJ22033.1"/>
    <property type="status" value="ALT_INIT"/>
    <property type="molecule type" value="Genomic_DNA"/>
</dbReference>
<dbReference type="SMR" id="Q3BYN0"/>
<dbReference type="STRING" id="456327.BJD11_20860"/>
<dbReference type="KEGG" id="xcv:XCV0402"/>
<dbReference type="eggNOG" id="COG0156">
    <property type="taxonomic scope" value="Bacteria"/>
</dbReference>
<dbReference type="HOGENOM" id="CLU_015846_11_2_6"/>
<dbReference type="UniPathway" id="UPA00078"/>
<dbReference type="Proteomes" id="UP000007069">
    <property type="component" value="Chromosome"/>
</dbReference>
<dbReference type="GO" id="GO:0008710">
    <property type="term" value="F:8-amino-7-oxononanoate synthase activity"/>
    <property type="evidence" value="ECO:0007669"/>
    <property type="project" value="UniProtKB-UniRule"/>
</dbReference>
<dbReference type="GO" id="GO:0030170">
    <property type="term" value="F:pyridoxal phosphate binding"/>
    <property type="evidence" value="ECO:0007669"/>
    <property type="project" value="UniProtKB-UniRule"/>
</dbReference>
<dbReference type="GO" id="GO:0009102">
    <property type="term" value="P:biotin biosynthetic process"/>
    <property type="evidence" value="ECO:0007669"/>
    <property type="project" value="UniProtKB-UniRule"/>
</dbReference>
<dbReference type="Gene3D" id="3.90.1150.10">
    <property type="entry name" value="Aspartate Aminotransferase, domain 1"/>
    <property type="match status" value="1"/>
</dbReference>
<dbReference type="Gene3D" id="3.40.640.10">
    <property type="entry name" value="Type I PLP-dependent aspartate aminotransferase-like (Major domain)"/>
    <property type="match status" value="1"/>
</dbReference>
<dbReference type="HAMAP" id="MF_01693">
    <property type="entry name" value="BioF_aminotrans_2"/>
    <property type="match status" value="1"/>
</dbReference>
<dbReference type="InterPro" id="IPR004839">
    <property type="entry name" value="Aminotransferase_I/II_large"/>
</dbReference>
<dbReference type="InterPro" id="IPR050087">
    <property type="entry name" value="AON_synthase_class-II"/>
</dbReference>
<dbReference type="InterPro" id="IPR004723">
    <property type="entry name" value="AONS_Archaea/Proteobacteria"/>
</dbReference>
<dbReference type="InterPro" id="IPR022834">
    <property type="entry name" value="AONS_Proteobacteria"/>
</dbReference>
<dbReference type="InterPro" id="IPR015424">
    <property type="entry name" value="PyrdxlP-dep_Trfase"/>
</dbReference>
<dbReference type="InterPro" id="IPR015421">
    <property type="entry name" value="PyrdxlP-dep_Trfase_major"/>
</dbReference>
<dbReference type="InterPro" id="IPR015422">
    <property type="entry name" value="PyrdxlP-dep_Trfase_small"/>
</dbReference>
<dbReference type="NCBIfam" id="TIGR00858">
    <property type="entry name" value="bioF"/>
    <property type="match status" value="1"/>
</dbReference>
<dbReference type="PANTHER" id="PTHR13693:SF100">
    <property type="entry name" value="8-AMINO-7-OXONONANOATE SYNTHASE"/>
    <property type="match status" value="1"/>
</dbReference>
<dbReference type="PANTHER" id="PTHR13693">
    <property type="entry name" value="CLASS II AMINOTRANSFERASE/8-AMINO-7-OXONONANOATE SYNTHASE"/>
    <property type="match status" value="1"/>
</dbReference>
<dbReference type="Pfam" id="PF00155">
    <property type="entry name" value="Aminotran_1_2"/>
    <property type="match status" value="1"/>
</dbReference>
<dbReference type="SUPFAM" id="SSF53383">
    <property type="entry name" value="PLP-dependent transferases"/>
    <property type="match status" value="1"/>
</dbReference>
<dbReference type="PROSITE" id="PS00599">
    <property type="entry name" value="AA_TRANSFER_CLASS_2"/>
    <property type="match status" value="1"/>
</dbReference>